<feature type="chain" id="PRO_1000062885" description="Transcriptional regulator MraZ">
    <location>
        <begin position="1"/>
        <end position="152"/>
    </location>
</feature>
<feature type="domain" description="SpoVT-AbrB 1" evidence="2">
    <location>
        <begin position="5"/>
        <end position="52"/>
    </location>
</feature>
<feature type="domain" description="SpoVT-AbrB 2" evidence="2">
    <location>
        <begin position="81"/>
        <end position="124"/>
    </location>
</feature>
<name>MRAZ_KLEP7</name>
<dbReference type="EMBL" id="CP000647">
    <property type="protein sequence ID" value="ABR75545.1"/>
    <property type="molecule type" value="Genomic_DNA"/>
</dbReference>
<dbReference type="RefSeq" id="WP_011977652.1">
    <property type="nucleotide sequence ID" value="NC_009648.1"/>
</dbReference>
<dbReference type="SMR" id="A6T4M4"/>
<dbReference type="STRING" id="272620.KPN_00085"/>
<dbReference type="PaxDb" id="272620-KPN_00085"/>
<dbReference type="EnsemblBacteria" id="ABR75545">
    <property type="protein sequence ID" value="ABR75545"/>
    <property type="gene ID" value="KPN_00085"/>
</dbReference>
<dbReference type="KEGG" id="kpn:KPN_00085"/>
<dbReference type="HOGENOM" id="CLU_107907_2_0_6"/>
<dbReference type="Proteomes" id="UP000000265">
    <property type="component" value="Chromosome"/>
</dbReference>
<dbReference type="GO" id="GO:0005737">
    <property type="term" value="C:cytoplasm"/>
    <property type="evidence" value="ECO:0007669"/>
    <property type="project" value="UniProtKB-UniRule"/>
</dbReference>
<dbReference type="GO" id="GO:0009295">
    <property type="term" value="C:nucleoid"/>
    <property type="evidence" value="ECO:0007669"/>
    <property type="project" value="UniProtKB-SubCell"/>
</dbReference>
<dbReference type="GO" id="GO:0003700">
    <property type="term" value="F:DNA-binding transcription factor activity"/>
    <property type="evidence" value="ECO:0007669"/>
    <property type="project" value="UniProtKB-UniRule"/>
</dbReference>
<dbReference type="GO" id="GO:0000976">
    <property type="term" value="F:transcription cis-regulatory region binding"/>
    <property type="evidence" value="ECO:0007669"/>
    <property type="project" value="TreeGrafter"/>
</dbReference>
<dbReference type="GO" id="GO:2000143">
    <property type="term" value="P:negative regulation of DNA-templated transcription initiation"/>
    <property type="evidence" value="ECO:0007669"/>
    <property type="project" value="TreeGrafter"/>
</dbReference>
<dbReference type="CDD" id="cd16321">
    <property type="entry name" value="MraZ_C"/>
    <property type="match status" value="1"/>
</dbReference>
<dbReference type="CDD" id="cd16320">
    <property type="entry name" value="MraZ_N"/>
    <property type="match status" value="1"/>
</dbReference>
<dbReference type="FunFam" id="3.40.1550.20:FF:000001">
    <property type="entry name" value="Transcriptional regulator MraZ"/>
    <property type="match status" value="1"/>
</dbReference>
<dbReference type="Gene3D" id="3.40.1550.20">
    <property type="entry name" value="Transcriptional regulator MraZ domain"/>
    <property type="match status" value="1"/>
</dbReference>
<dbReference type="HAMAP" id="MF_01008">
    <property type="entry name" value="MraZ"/>
    <property type="match status" value="1"/>
</dbReference>
<dbReference type="InterPro" id="IPR003444">
    <property type="entry name" value="MraZ"/>
</dbReference>
<dbReference type="InterPro" id="IPR035644">
    <property type="entry name" value="MraZ_C"/>
</dbReference>
<dbReference type="InterPro" id="IPR020603">
    <property type="entry name" value="MraZ_dom"/>
</dbReference>
<dbReference type="InterPro" id="IPR035642">
    <property type="entry name" value="MraZ_N"/>
</dbReference>
<dbReference type="InterPro" id="IPR038619">
    <property type="entry name" value="MraZ_sf"/>
</dbReference>
<dbReference type="InterPro" id="IPR007159">
    <property type="entry name" value="SpoVT-AbrB_dom"/>
</dbReference>
<dbReference type="InterPro" id="IPR037914">
    <property type="entry name" value="SpoVT-AbrB_sf"/>
</dbReference>
<dbReference type="NCBIfam" id="TIGR00242">
    <property type="entry name" value="division/cell wall cluster transcriptional repressor MraZ"/>
    <property type="match status" value="1"/>
</dbReference>
<dbReference type="PANTHER" id="PTHR34701">
    <property type="entry name" value="TRANSCRIPTIONAL REGULATOR MRAZ"/>
    <property type="match status" value="1"/>
</dbReference>
<dbReference type="PANTHER" id="PTHR34701:SF1">
    <property type="entry name" value="TRANSCRIPTIONAL REGULATOR MRAZ"/>
    <property type="match status" value="1"/>
</dbReference>
<dbReference type="Pfam" id="PF02381">
    <property type="entry name" value="MraZ"/>
    <property type="match status" value="2"/>
</dbReference>
<dbReference type="SUPFAM" id="SSF89447">
    <property type="entry name" value="AbrB/MazE/MraZ-like"/>
    <property type="match status" value="1"/>
</dbReference>
<dbReference type="PROSITE" id="PS51740">
    <property type="entry name" value="SPOVT_ABRB"/>
    <property type="match status" value="2"/>
</dbReference>
<gene>
    <name evidence="1" type="primary">mraZ</name>
    <name type="ordered locus">KPN78578_00840</name>
    <name type="ORF">KPN_00085</name>
</gene>
<proteinExistence type="inferred from homology"/>
<sequence length="152" mass="17340">MFRGATLVNLDSKGRLAVPTRYREGLIENAAGQLVCTIDIHHPCLLLYPLPEWEVIEQKLSRLSSMNPVERRVQRLLLGHASECQMDNAGRLLIAPVLRQHAGLTKEVMLVGQFNKFELWDETTWYQRVKEDIDAEQSATGELSERLQDLSL</sequence>
<organism>
    <name type="scientific">Klebsiella pneumoniae subsp. pneumoniae (strain ATCC 700721 / MGH 78578)</name>
    <dbReference type="NCBI Taxonomy" id="272620"/>
    <lineage>
        <taxon>Bacteria</taxon>
        <taxon>Pseudomonadati</taxon>
        <taxon>Pseudomonadota</taxon>
        <taxon>Gammaproteobacteria</taxon>
        <taxon>Enterobacterales</taxon>
        <taxon>Enterobacteriaceae</taxon>
        <taxon>Klebsiella/Raoultella group</taxon>
        <taxon>Klebsiella</taxon>
        <taxon>Klebsiella pneumoniae complex</taxon>
    </lineage>
</organism>
<accession>A6T4M4</accession>
<protein>
    <recommendedName>
        <fullName>Transcriptional regulator MraZ</fullName>
    </recommendedName>
</protein>
<evidence type="ECO:0000255" key="1">
    <source>
        <dbReference type="HAMAP-Rule" id="MF_01008"/>
    </source>
</evidence>
<evidence type="ECO:0000255" key="2">
    <source>
        <dbReference type="PROSITE-ProRule" id="PRU01076"/>
    </source>
</evidence>
<comment type="function">
    <text evidence="1">Negatively regulates its own expression and that of the subsequent genes in the proximal part of the division and cell wall (dcw) gene cluster. Acts by binding directly to DNA. May also regulate the expression of genes outside the dcw cluster.</text>
</comment>
<comment type="subunit">
    <text evidence="1">Forms oligomers.</text>
</comment>
<comment type="subcellular location">
    <subcellularLocation>
        <location evidence="1">Cytoplasm</location>
        <location evidence="1">Nucleoid</location>
    </subcellularLocation>
</comment>
<comment type="similarity">
    <text evidence="1">Belongs to the MraZ family.</text>
</comment>
<reference key="1">
    <citation type="submission" date="2006-09" db="EMBL/GenBank/DDBJ databases">
        <authorList>
            <consortium name="The Klebsiella pneumonia Genome Sequencing Project"/>
            <person name="McClelland M."/>
            <person name="Sanderson E.K."/>
            <person name="Spieth J."/>
            <person name="Clifton W.S."/>
            <person name="Latreille P."/>
            <person name="Sabo A."/>
            <person name="Pepin K."/>
            <person name="Bhonagiri V."/>
            <person name="Porwollik S."/>
            <person name="Ali J."/>
            <person name="Wilson R.K."/>
        </authorList>
    </citation>
    <scope>NUCLEOTIDE SEQUENCE [LARGE SCALE GENOMIC DNA]</scope>
    <source>
        <strain>ATCC 700721 / MGH 78578</strain>
    </source>
</reference>
<keyword id="KW-0963">Cytoplasm</keyword>
<keyword id="KW-0238">DNA-binding</keyword>
<keyword id="KW-0677">Repeat</keyword>
<keyword id="KW-0678">Repressor</keyword>
<keyword id="KW-0804">Transcription</keyword>
<keyword id="KW-0805">Transcription regulation</keyword>